<gene>
    <name type="primary">rsmE</name>
    <name type="ordered locus">MT2441</name>
</gene>
<comment type="function">
    <text evidence="1">Specifically methylates the N3 position of the uracil ring of uridine 1498 (m3U1498) in 16S rRNA. Acts on the fully assembled 30S ribosomal subunit (By similarity).</text>
</comment>
<comment type="catalytic activity">
    <reaction>
        <text>uridine(1498) in 16S rRNA + S-adenosyl-L-methionine = N(3)-methyluridine(1498) in 16S rRNA + S-adenosyl-L-homocysteine + H(+)</text>
        <dbReference type="Rhea" id="RHEA:42920"/>
        <dbReference type="Rhea" id="RHEA-COMP:10283"/>
        <dbReference type="Rhea" id="RHEA-COMP:10284"/>
        <dbReference type="ChEBI" id="CHEBI:15378"/>
        <dbReference type="ChEBI" id="CHEBI:57856"/>
        <dbReference type="ChEBI" id="CHEBI:59789"/>
        <dbReference type="ChEBI" id="CHEBI:65315"/>
        <dbReference type="ChEBI" id="CHEBI:74502"/>
        <dbReference type="EC" id="2.1.1.193"/>
    </reaction>
</comment>
<comment type="subcellular location">
    <subcellularLocation>
        <location evidence="1">Cytoplasm</location>
    </subcellularLocation>
</comment>
<comment type="similarity">
    <text evidence="2">Belongs to the RNA methyltransferase RsmE family.</text>
</comment>
<organism>
    <name type="scientific">Mycobacterium tuberculosis (strain CDC 1551 / Oshkosh)</name>
    <dbReference type="NCBI Taxonomy" id="83331"/>
    <lineage>
        <taxon>Bacteria</taxon>
        <taxon>Bacillati</taxon>
        <taxon>Actinomycetota</taxon>
        <taxon>Actinomycetes</taxon>
        <taxon>Mycobacteriales</taxon>
        <taxon>Mycobacteriaceae</taxon>
        <taxon>Mycobacterium</taxon>
        <taxon>Mycobacterium tuberculosis complex</taxon>
    </lineage>
</organism>
<name>RSME_MYCTO</name>
<evidence type="ECO:0000250" key="1"/>
<evidence type="ECO:0000305" key="2"/>
<dbReference type="EC" id="2.1.1.193"/>
<dbReference type="EMBL" id="AE000516">
    <property type="protein sequence ID" value="AAK46735.1"/>
    <property type="molecule type" value="Genomic_DNA"/>
</dbReference>
<dbReference type="PIR" id="C70587">
    <property type="entry name" value="C70587"/>
</dbReference>
<dbReference type="RefSeq" id="WP_003900509.1">
    <property type="nucleotide sequence ID" value="NZ_KK341227.1"/>
</dbReference>
<dbReference type="SMR" id="P9WGX0"/>
<dbReference type="KEGG" id="mtc:MT2441"/>
<dbReference type="PATRIC" id="fig|83331.31.peg.2631"/>
<dbReference type="HOGENOM" id="CLU_067442_2_0_11"/>
<dbReference type="Proteomes" id="UP000001020">
    <property type="component" value="Chromosome"/>
</dbReference>
<dbReference type="GO" id="GO:0005737">
    <property type="term" value="C:cytoplasm"/>
    <property type="evidence" value="ECO:0007669"/>
    <property type="project" value="UniProtKB-SubCell"/>
</dbReference>
<dbReference type="GO" id="GO:0070042">
    <property type="term" value="F:rRNA (uridine-N3-)-methyltransferase activity"/>
    <property type="evidence" value="ECO:0007669"/>
    <property type="project" value="TreeGrafter"/>
</dbReference>
<dbReference type="GO" id="GO:0070475">
    <property type="term" value="P:rRNA base methylation"/>
    <property type="evidence" value="ECO:0007669"/>
    <property type="project" value="TreeGrafter"/>
</dbReference>
<dbReference type="CDD" id="cd18084">
    <property type="entry name" value="RsmE-like"/>
    <property type="match status" value="1"/>
</dbReference>
<dbReference type="FunFam" id="3.40.1280.10:FF:000023">
    <property type="entry name" value="Ribosomal RNA small subunit methyltransferase E"/>
    <property type="match status" value="1"/>
</dbReference>
<dbReference type="Gene3D" id="3.40.1280.10">
    <property type="match status" value="1"/>
</dbReference>
<dbReference type="Gene3D" id="2.40.240.20">
    <property type="entry name" value="Hypothetical PUA domain-like, domain 1"/>
    <property type="match status" value="1"/>
</dbReference>
<dbReference type="InterPro" id="IPR029028">
    <property type="entry name" value="Alpha/beta_knot_MTases"/>
</dbReference>
<dbReference type="InterPro" id="IPR015947">
    <property type="entry name" value="PUA-like_sf"/>
</dbReference>
<dbReference type="InterPro" id="IPR006700">
    <property type="entry name" value="RsmE"/>
</dbReference>
<dbReference type="InterPro" id="IPR046886">
    <property type="entry name" value="RsmE_MTase_dom"/>
</dbReference>
<dbReference type="InterPro" id="IPR046887">
    <property type="entry name" value="RsmE_PUA-like"/>
</dbReference>
<dbReference type="InterPro" id="IPR029026">
    <property type="entry name" value="tRNA_m1G_MTases_N"/>
</dbReference>
<dbReference type="NCBIfam" id="NF008693">
    <property type="entry name" value="PRK11713.2-3"/>
    <property type="match status" value="1"/>
</dbReference>
<dbReference type="NCBIfam" id="TIGR00046">
    <property type="entry name" value="RsmE family RNA methyltransferase"/>
    <property type="match status" value="1"/>
</dbReference>
<dbReference type="PANTHER" id="PTHR30027:SF3">
    <property type="entry name" value="16S RRNA (URACIL(1498)-N(3))-METHYLTRANSFERASE"/>
    <property type="match status" value="1"/>
</dbReference>
<dbReference type="PANTHER" id="PTHR30027">
    <property type="entry name" value="RIBOSOMAL RNA SMALL SUBUNIT METHYLTRANSFERASE E"/>
    <property type="match status" value="1"/>
</dbReference>
<dbReference type="Pfam" id="PF04452">
    <property type="entry name" value="Methyltrans_RNA"/>
    <property type="match status" value="1"/>
</dbReference>
<dbReference type="Pfam" id="PF20260">
    <property type="entry name" value="PUA_4"/>
    <property type="match status" value="1"/>
</dbReference>
<dbReference type="PIRSF" id="PIRSF015601">
    <property type="entry name" value="MTase_slr0722"/>
    <property type="match status" value="1"/>
</dbReference>
<dbReference type="SUPFAM" id="SSF75217">
    <property type="entry name" value="alpha/beta knot"/>
    <property type="match status" value="1"/>
</dbReference>
<dbReference type="SUPFAM" id="SSF88697">
    <property type="entry name" value="PUA domain-like"/>
    <property type="match status" value="1"/>
</dbReference>
<reference key="1">
    <citation type="journal article" date="2002" name="J. Bacteriol.">
        <title>Whole-genome comparison of Mycobacterium tuberculosis clinical and laboratory strains.</title>
        <authorList>
            <person name="Fleischmann R.D."/>
            <person name="Alland D."/>
            <person name="Eisen J.A."/>
            <person name="Carpenter L."/>
            <person name="White O."/>
            <person name="Peterson J.D."/>
            <person name="DeBoy R.T."/>
            <person name="Dodson R.J."/>
            <person name="Gwinn M.L."/>
            <person name="Haft D.H."/>
            <person name="Hickey E.K."/>
            <person name="Kolonay J.F."/>
            <person name="Nelson W.C."/>
            <person name="Umayam L.A."/>
            <person name="Ermolaeva M.D."/>
            <person name="Salzberg S.L."/>
            <person name="Delcher A."/>
            <person name="Utterback T.R."/>
            <person name="Weidman J.F."/>
            <person name="Khouri H.M."/>
            <person name="Gill J."/>
            <person name="Mikula A."/>
            <person name="Bishai W."/>
            <person name="Jacobs W.R. Jr."/>
            <person name="Venter J.C."/>
            <person name="Fraser C.M."/>
        </authorList>
    </citation>
    <scope>NUCLEOTIDE SEQUENCE [LARGE SCALE GENOMIC DNA]</scope>
    <source>
        <strain>CDC 1551 / Oshkosh</strain>
    </source>
</reference>
<keyword id="KW-0963">Cytoplasm</keyword>
<keyword id="KW-0489">Methyltransferase</keyword>
<keyword id="KW-1185">Reference proteome</keyword>
<keyword id="KW-0698">rRNA processing</keyword>
<keyword id="KW-0949">S-adenosyl-L-methionine</keyword>
<keyword id="KW-0808">Transferase</keyword>
<sequence length="262" mass="27653">MVAMLFYVDTLPDTGAVAVVDGDEGFHAATVRRIRPGEQLVLGDGVGRLARCVVEQAGRGGLRARVLRRWSVPPVRPPVTVVQALPKSERSELAIELATEAGADAFLAWQAARCVANWDGARVDKGLRRWRAVVRSAARQSRRARIPPVDGVLSTPMLVQRVREEVAAGAAVLVLHEEATERIVDIAAAQAGSLMLVVGPEGGIAPDELAALTDAGAVAVRLGPTVLRTSTAAAVALGAVGVLTSRWDASASDCEYCDVTRR</sequence>
<proteinExistence type="inferred from homology"/>
<accession>P9WGX0</accession>
<accession>L0T9M1</accession>
<accession>O05826</accession>
<accession>P67202</accession>
<protein>
    <recommendedName>
        <fullName>Ribosomal RNA small subunit methyltransferase E</fullName>
        <ecNumber>2.1.1.193</ecNumber>
    </recommendedName>
    <alternativeName>
        <fullName>16S rRNA m3U1498 methyltransferase</fullName>
    </alternativeName>
</protein>
<feature type="chain" id="PRO_0000428288" description="Ribosomal RNA small subunit methyltransferase E">
    <location>
        <begin position="1"/>
        <end position="262"/>
    </location>
</feature>